<accession>Q9XVX1</accession>
<sequence length="89" mass="10095">MSFQLTLFSMLFLLIAVVVGQPIQSQNGDLKMQAVQDNSPLNMEAFNDDSALYDYLEQSDPSLKSMEKRWANQVRFGKRASWASSVRFG</sequence>
<comment type="function">
    <text evidence="4">FMRFamides and FMRFamide-like peptides are neuropeptides. WANQVRF-amide inhibits the activity of dissected pharyngeal myogenic muscle system.</text>
</comment>
<comment type="subcellular location">
    <subcellularLocation>
        <location evidence="5">Secreted</location>
    </subcellularLocation>
</comment>
<comment type="tissue specificity">
    <text evidence="2">Each flp gene is expressed in a distinct set of neurons. Flp-19 is expressed in the URX interneurons, the serotonin and acetylcholine-expressing HSN neurons, and the AIN, AWA and BAG neurons.</text>
</comment>
<comment type="developmental stage">
    <text evidence="2">Expressed from the comma stage of embryogenesis, during all larval stages, and in adults.</text>
</comment>
<comment type="similarity">
    <text evidence="3">Belongs to the FARP (FMRFamide related peptide) family.</text>
</comment>
<reference evidence="6" key="1">
    <citation type="journal article" date="1998" name="Science">
        <title>Genome sequence of the nematode C. elegans: a platform for investigating biology.</title>
        <authorList>
            <consortium name="The C. elegans sequencing consortium"/>
        </authorList>
    </citation>
    <scope>NUCLEOTIDE SEQUENCE [LARGE SCALE GENOMIC DNA]</scope>
    <source>
        <strain evidence="6">Bristol N2</strain>
    </source>
</reference>
<reference evidence="5" key="2">
    <citation type="journal article" date="2005" name="Biochem. Biophys. Res. Commun.">
        <title>Discovering neuropeptides in Caenorhabditis elegans by two dimensional liquid chromatography and mass spectrometry.</title>
        <authorList>
            <person name="Husson S.J."/>
            <person name="Clynen E."/>
            <person name="Baggerman G."/>
            <person name="De Loof A."/>
            <person name="Schoofs L."/>
        </authorList>
    </citation>
    <scope>PROTEIN SEQUENCE OF 70-76</scope>
    <scope>AMIDATION AT PHE-76</scope>
    <source>
        <strain evidence="3">Bristol N2</strain>
    </source>
</reference>
<reference evidence="5" key="3">
    <citation type="journal article" date="2004" name="J. Comp. Neurol.">
        <title>Expression and regulation of an FMRFamide-related neuropeptide gene family in Caenorhabditis elegans.</title>
        <authorList>
            <person name="Kim K."/>
            <person name="Li C."/>
        </authorList>
    </citation>
    <scope>TISSUE SPECIFICITY</scope>
    <scope>DEVELOPMENTAL STAGE</scope>
</reference>
<reference evidence="5" key="4">
    <citation type="journal article" date="2005" name="J. Neurobiol.">
        <title>Role of a FMRFamide-like family of neuropeptides in the pharyngeal nervous system of Caenorhabditis elegans.</title>
        <authorList>
            <person name="Papaioannou S."/>
            <person name="Marsden D."/>
            <person name="Franks C.J."/>
            <person name="Walker R.J."/>
            <person name="Holden-Dye L."/>
        </authorList>
    </citation>
    <scope>FUNCTION</scope>
</reference>
<feature type="signal peptide" evidence="1">
    <location>
        <begin position="1"/>
        <end position="20"/>
    </location>
</feature>
<feature type="propeptide" id="PRO_0000312080" evidence="1">
    <location>
        <begin position="21"/>
        <end position="67"/>
    </location>
</feature>
<feature type="peptide" id="PRO_0000312081" description="WANQVRF-amide" evidence="3">
    <location>
        <begin position="70"/>
        <end position="76"/>
    </location>
</feature>
<feature type="propeptide" id="PRO_0000312082" evidence="1">
    <location>
        <begin position="80"/>
        <end position="89"/>
    </location>
</feature>
<feature type="modified residue" description="Phenylalanine amide" evidence="3">
    <location>
        <position position="76"/>
    </location>
</feature>
<name>FLP19_CAEEL</name>
<gene>
    <name evidence="6" type="primary">flp-19</name>
    <name type="ORF">M79.4</name>
</gene>
<organism>
    <name type="scientific">Caenorhabditis elegans</name>
    <dbReference type="NCBI Taxonomy" id="6239"/>
    <lineage>
        <taxon>Eukaryota</taxon>
        <taxon>Metazoa</taxon>
        <taxon>Ecdysozoa</taxon>
        <taxon>Nematoda</taxon>
        <taxon>Chromadorea</taxon>
        <taxon>Rhabditida</taxon>
        <taxon>Rhabditina</taxon>
        <taxon>Rhabditomorpha</taxon>
        <taxon>Rhabditoidea</taxon>
        <taxon>Rhabditidae</taxon>
        <taxon>Peloderinae</taxon>
        <taxon>Caenorhabditis</taxon>
    </lineage>
</organism>
<protein>
    <recommendedName>
        <fullName>FMRFamide-like neuropeptides 19</fullName>
    </recommendedName>
    <component>
        <recommendedName>
            <fullName>WANQVRF-amide</fullName>
        </recommendedName>
    </component>
</protein>
<evidence type="ECO:0000255" key="1"/>
<evidence type="ECO:0000269" key="2">
    <source>
    </source>
</evidence>
<evidence type="ECO:0000269" key="3">
    <source>
    </source>
</evidence>
<evidence type="ECO:0000269" key="4">
    <source>
    </source>
</evidence>
<evidence type="ECO:0000305" key="5"/>
<evidence type="ECO:0000312" key="6">
    <source>
        <dbReference type="EMBL" id="CAA90690.1"/>
    </source>
</evidence>
<dbReference type="EMBL" id="Z50806">
    <property type="protein sequence ID" value="CAA90690.1"/>
    <property type="molecule type" value="Genomic_DNA"/>
</dbReference>
<dbReference type="PIR" id="T23831">
    <property type="entry name" value="T23831"/>
</dbReference>
<dbReference type="RefSeq" id="NP_509776.1">
    <property type="nucleotide sequence ID" value="NM_077375.6"/>
</dbReference>
<dbReference type="SMR" id="Q9XVX1"/>
<dbReference type="BioGRID" id="46172">
    <property type="interactions" value="5"/>
</dbReference>
<dbReference type="DIP" id="DIP-26330N"/>
<dbReference type="FunCoup" id="Q9XVX1">
    <property type="interactions" value="1306"/>
</dbReference>
<dbReference type="STRING" id="6239.M79.4.1"/>
<dbReference type="PaxDb" id="6239-M79.4"/>
<dbReference type="EnsemblMetazoa" id="M79.4.1">
    <property type="protein sequence ID" value="M79.4.1"/>
    <property type="gene ID" value="WBGene00001462"/>
</dbReference>
<dbReference type="GeneID" id="181260"/>
<dbReference type="KEGG" id="cel:CELE_M79.4"/>
<dbReference type="UCSC" id="M79.4">
    <property type="organism name" value="c. elegans"/>
</dbReference>
<dbReference type="AGR" id="WB:WBGene00001462"/>
<dbReference type="CTD" id="181260"/>
<dbReference type="WormBase" id="M79.4">
    <property type="protein sequence ID" value="CE18890"/>
    <property type="gene ID" value="WBGene00001462"/>
    <property type="gene designation" value="flp-19"/>
</dbReference>
<dbReference type="eggNOG" id="ENOG502TIAY">
    <property type="taxonomic scope" value="Eukaryota"/>
</dbReference>
<dbReference type="HOGENOM" id="CLU_2442938_0_0_1"/>
<dbReference type="InParanoid" id="Q9XVX1"/>
<dbReference type="OMA" id="MEKKWAN"/>
<dbReference type="OrthoDB" id="5855638at2759"/>
<dbReference type="PRO" id="PR:Q9XVX1"/>
<dbReference type="Proteomes" id="UP000001940">
    <property type="component" value="Chromosome X"/>
</dbReference>
<dbReference type="Bgee" id="WBGene00001462">
    <property type="expression patterns" value="Expressed in larva and 3 other cell types or tissues"/>
</dbReference>
<dbReference type="GO" id="GO:0005576">
    <property type="term" value="C:extracellular region"/>
    <property type="evidence" value="ECO:0007669"/>
    <property type="project" value="UniProtKB-SubCell"/>
</dbReference>
<dbReference type="GO" id="GO:0007218">
    <property type="term" value="P:neuropeptide signaling pathway"/>
    <property type="evidence" value="ECO:0007669"/>
    <property type="project" value="UniProtKB-KW"/>
</dbReference>
<proteinExistence type="evidence at protein level"/>
<keyword id="KW-0027">Amidation</keyword>
<keyword id="KW-0165">Cleavage on pair of basic residues</keyword>
<keyword id="KW-0903">Direct protein sequencing</keyword>
<keyword id="KW-0527">Neuropeptide</keyword>
<keyword id="KW-1185">Reference proteome</keyword>
<keyword id="KW-0964">Secreted</keyword>
<keyword id="KW-0732">Signal</keyword>